<comment type="function">
    <text evidence="1">One of the early assembly proteins it binds 23S rRNA. One of the proteins that surrounds the polypeptide exit tunnel on the outside of the ribosome. Forms the main docking site for trigger factor binding to the ribosome.</text>
</comment>
<comment type="subunit">
    <text evidence="1">Part of the 50S ribosomal subunit. Contacts protein L29, and trigger factor when it is bound to the ribosome.</text>
</comment>
<comment type="similarity">
    <text evidence="1">Belongs to the universal ribosomal protein uL23 family.</text>
</comment>
<sequence>MDARDIIKRPVVTEESTSILDDKKYTFEVDTRATKTQVKYAVEEIFDVKVAKVNVMNYKGKLKRMGRYAGYTNKRRKAIVTVTADSKEIQFFEV</sequence>
<proteinExistence type="inferred from homology"/>
<name>RL23_LISMC</name>
<organism>
    <name type="scientific">Listeria monocytogenes serotype 4b (strain CLIP80459)</name>
    <dbReference type="NCBI Taxonomy" id="568819"/>
    <lineage>
        <taxon>Bacteria</taxon>
        <taxon>Bacillati</taxon>
        <taxon>Bacillota</taxon>
        <taxon>Bacilli</taxon>
        <taxon>Bacillales</taxon>
        <taxon>Listeriaceae</taxon>
        <taxon>Listeria</taxon>
    </lineage>
</organism>
<accession>C1KZH8</accession>
<feature type="chain" id="PRO_1000215038" description="Large ribosomal subunit protein uL23">
    <location>
        <begin position="1"/>
        <end position="94"/>
    </location>
</feature>
<gene>
    <name evidence="1" type="primary">rplW</name>
    <name type="ordered locus">Lm4b_02597</name>
</gene>
<reference key="1">
    <citation type="journal article" date="2012" name="BMC Genomics">
        <title>Comparative genomics and transcriptomics of lineages I, II, and III strains of Listeria monocytogenes.</title>
        <authorList>
            <person name="Hain T."/>
            <person name="Ghai R."/>
            <person name="Billion A."/>
            <person name="Kuenne C.T."/>
            <person name="Steinweg C."/>
            <person name="Izar B."/>
            <person name="Mohamed W."/>
            <person name="Mraheil M."/>
            <person name="Domann E."/>
            <person name="Schaffrath S."/>
            <person name="Karst U."/>
            <person name="Goesmann A."/>
            <person name="Oehm S."/>
            <person name="Puhler A."/>
            <person name="Merkl R."/>
            <person name="Vorwerk S."/>
            <person name="Glaser P."/>
            <person name="Garrido P."/>
            <person name="Rusniok C."/>
            <person name="Buchrieser C."/>
            <person name="Goebel W."/>
            <person name="Chakraborty T."/>
        </authorList>
    </citation>
    <scope>NUCLEOTIDE SEQUENCE [LARGE SCALE GENOMIC DNA]</scope>
    <source>
        <strain>CLIP80459</strain>
    </source>
</reference>
<keyword id="KW-0687">Ribonucleoprotein</keyword>
<keyword id="KW-0689">Ribosomal protein</keyword>
<keyword id="KW-0694">RNA-binding</keyword>
<keyword id="KW-0699">rRNA-binding</keyword>
<dbReference type="EMBL" id="FM242711">
    <property type="protein sequence ID" value="CAS06351.1"/>
    <property type="molecule type" value="Genomic_DNA"/>
</dbReference>
<dbReference type="RefSeq" id="WP_003720948.1">
    <property type="nucleotide sequence ID" value="NC_012488.1"/>
</dbReference>
<dbReference type="SMR" id="C1KZH8"/>
<dbReference type="GeneID" id="32488625"/>
<dbReference type="KEGG" id="lmc:Lm4b_02597"/>
<dbReference type="HOGENOM" id="CLU_037562_3_2_9"/>
<dbReference type="GO" id="GO:1990904">
    <property type="term" value="C:ribonucleoprotein complex"/>
    <property type="evidence" value="ECO:0007669"/>
    <property type="project" value="UniProtKB-KW"/>
</dbReference>
<dbReference type="GO" id="GO:0005840">
    <property type="term" value="C:ribosome"/>
    <property type="evidence" value="ECO:0007669"/>
    <property type="project" value="UniProtKB-KW"/>
</dbReference>
<dbReference type="GO" id="GO:0019843">
    <property type="term" value="F:rRNA binding"/>
    <property type="evidence" value="ECO:0007669"/>
    <property type="project" value="UniProtKB-UniRule"/>
</dbReference>
<dbReference type="GO" id="GO:0003735">
    <property type="term" value="F:structural constituent of ribosome"/>
    <property type="evidence" value="ECO:0007669"/>
    <property type="project" value="InterPro"/>
</dbReference>
<dbReference type="GO" id="GO:0006412">
    <property type="term" value="P:translation"/>
    <property type="evidence" value="ECO:0007669"/>
    <property type="project" value="UniProtKB-UniRule"/>
</dbReference>
<dbReference type="FunFam" id="3.30.70.330:FF:000001">
    <property type="entry name" value="50S ribosomal protein L23"/>
    <property type="match status" value="1"/>
</dbReference>
<dbReference type="Gene3D" id="3.30.70.330">
    <property type="match status" value="1"/>
</dbReference>
<dbReference type="HAMAP" id="MF_01369_B">
    <property type="entry name" value="Ribosomal_uL23_B"/>
    <property type="match status" value="1"/>
</dbReference>
<dbReference type="InterPro" id="IPR012677">
    <property type="entry name" value="Nucleotide-bd_a/b_plait_sf"/>
</dbReference>
<dbReference type="InterPro" id="IPR013025">
    <property type="entry name" value="Ribosomal_uL23-like"/>
</dbReference>
<dbReference type="InterPro" id="IPR012678">
    <property type="entry name" value="Ribosomal_uL23/eL15/eS24_sf"/>
</dbReference>
<dbReference type="NCBIfam" id="NF004363">
    <property type="entry name" value="PRK05738.2-4"/>
    <property type="match status" value="1"/>
</dbReference>
<dbReference type="PANTHER" id="PTHR11620">
    <property type="entry name" value="60S RIBOSOMAL PROTEIN L23A"/>
    <property type="match status" value="1"/>
</dbReference>
<dbReference type="Pfam" id="PF00276">
    <property type="entry name" value="Ribosomal_L23"/>
    <property type="match status" value="1"/>
</dbReference>
<dbReference type="SUPFAM" id="SSF54189">
    <property type="entry name" value="Ribosomal proteins S24e, L23 and L15e"/>
    <property type="match status" value="1"/>
</dbReference>
<evidence type="ECO:0000255" key="1">
    <source>
        <dbReference type="HAMAP-Rule" id="MF_01369"/>
    </source>
</evidence>
<evidence type="ECO:0000305" key="2"/>
<protein>
    <recommendedName>
        <fullName evidence="1">Large ribosomal subunit protein uL23</fullName>
    </recommendedName>
    <alternativeName>
        <fullName evidence="2">50S ribosomal protein L23</fullName>
    </alternativeName>
</protein>